<dbReference type="EC" id="2.4.1.-"/>
<dbReference type="EMBL" id="L43967">
    <property type="protein sequence ID" value="AAC71559.1"/>
    <property type="molecule type" value="Genomic_DNA"/>
</dbReference>
<dbReference type="RefSeq" id="WP_010869439.1">
    <property type="nucleotide sequence ID" value="NC_000908.2"/>
</dbReference>
<dbReference type="SMR" id="Q9ZB73"/>
<dbReference type="FunCoup" id="Q9ZB73">
    <property type="interactions" value="36"/>
</dbReference>
<dbReference type="STRING" id="243273.MG_517"/>
<dbReference type="CAZy" id="GT2">
    <property type="family name" value="Glycosyltransferase Family 2"/>
</dbReference>
<dbReference type="GeneID" id="88282510"/>
<dbReference type="KEGG" id="mge:MG_517"/>
<dbReference type="eggNOG" id="COG0463">
    <property type="taxonomic scope" value="Bacteria"/>
</dbReference>
<dbReference type="HOGENOM" id="CLU_813338_0_0_14"/>
<dbReference type="InParanoid" id="Q9ZB73"/>
<dbReference type="OrthoDB" id="9785185at2"/>
<dbReference type="BioCyc" id="MGEN243273:G1GJ2-419-MONOMER"/>
<dbReference type="BRENDA" id="2.4.1.315">
    <property type="organism ID" value="3528"/>
</dbReference>
<dbReference type="SABIO-RK" id="Q9ZB73"/>
<dbReference type="UniPathway" id="UPA00894"/>
<dbReference type="Proteomes" id="UP000000807">
    <property type="component" value="Chromosome"/>
</dbReference>
<dbReference type="GO" id="GO:0005886">
    <property type="term" value="C:plasma membrane"/>
    <property type="evidence" value="ECO:0007669"/>
    <property type="project" value="UniProtKB-SubCell"/>
</dbReference>
<dbReference type="GO" id="GO:0046509">
    <property type="term" value="F:1,2-diacylglycerol 3-beta-galactosyltransferase activity"/>
    <property type="evidence" value="ECO:0007669"/>
    <property type="project" value="RHEA"/>
</dbReference>
<dbReference type="GO" id="GO:0016758">
    <property type="term" value="F:hexosyltransferase activity"/>
    <property type="evidence" value="ECO:0000314"/>
    <property type="project" value="UniProtKB"/>
</dbReference>
<dbReference type="GO" id="GO:0009246">
    <property type="term" value="P:enterobacterial common antigen biosynthetic process"/>
    <property type="evidence" value="ECO:0007669"/>
    <property type="project" value="UniProtKB-UniPathway"/>
</dbReference>
<dbReference type="GO" id="GO:0006071">
    <property type="term" value="P:glycerol metabolic process"/>
    <property type="evidence" value="ECO:0007669"/>
    <property type="project" value="UniProtKB-KW"/>
</dbReference>
<dbReference type="GO" id="GO:0046467">
    <property type="term" value="P:membrane lipid biosynthetic process"/>
    <property type="evidence" value="ECO:0000314"/>
    <property type="project" value="UniProtKB"/>
</dbReference>
<dbReference type="CDD" id="cd00761">
    <property type="entry name" value="Glyco_tranf_GTA_type"/>
    <property type="match status" value="1"/>
</dbReference>
<dbReference type="FunFam" id="3.90.550.10:FF:000323">
    <property type="entry name" value="Processive diacylglycerol beta-glycosyltransferase"/>
    <property type="match status" value="1"/>
</dbReference>
<dbReference type="Gene3D" id="3.90.550.10">
    <property type="entry name" value="Spore Coat Polysaccharide Biosynthesis Protein SpsA, Chain A"/>
    <property type="match status" value="1"/>
</dbReference>
<dbReference type="InterPro" id="IPR001173">
    <property type="entry name" value="Glyco_trans_2-like"/>
</dbReference>
<dbReference type="InterPro" id="IPR029044">
    <property type="entry name" value="Nucleotide-diphossugar_trans"/>
</dbReference>
<dbReference type="PANTHER" id="PTHR22916">
    <property type="entry name" value="GLYCOSYLTRANSFERASE"/>
    <property type="match status" value="1"/>
</dbReference>
<dbReference type="PANTHER" id="PTHR22916:SF51">
    <property type="entry name" value="GLYCOSYLTRANSFERASE EPSH-RELATED"/>
    <property type="match status" value="1"/>
</dbReference>
<dbReference type="Pfam" id="PF00535">
    <property type="entry name" value="Glycos_transf_2"/>
    <property type="match status" value="1"/>
</dbReference>
<dbReference type="SUPFAM" id="SSF53448">
    <property type="entry name" value="Nucleotide-diphospho-sugar transferases"/>
    <property type="match status" value="1"/>
</dbReference>
<feature type="chain" id="PRO_0000059245" description="Processive diacylglycerol beta-glycosyltransferase">
    <location>
        <begin position="1"/>
        <end position="341"/>
    </location>
</feature>
<reference key="1">
    <citation type="journal article" date="1995" name="Science">
        <title>The minimal gene complement of Mycoplasma genitalium.</title>
        <authorList>
            <person name="Fraser C.M."/>
            <person name="Gocayne J.D."/>
            <person name="White O."/>
            <person name="Adams M.D."/>
            <person name="Clayton R.A."/>
            <person name="Fleischmann R.D."/>
            <person name="Bult C.J."/>
            <person name="Kerlavage A.R."/>
            <person name="Sutton G.G."/>
            <person name="Kelley J.M."/>
            <person name="Fritchman J.L."/>
            <person name="Weidman J.F."/>
            <person name="Small K.V."/>
            <person name="Sandusky M."/>
            <person name="Fuhrmann J.L."/>
            <person name="Nguyen D.T."/>
            <person name="Utterback T.R."/>
            <person name="Saudek D.M."/>
            <person name="Phillips C.A."/>
            <person name="Merrick J.M."/>
            <person name="Tomb J.-F."/>
            <person name="Dougherty B.A."/>
            <person name="Bott K.F."/>
            <person name="Hu P.-C."/>
            <person name="Lucier T.S."/>
            <person name="Peterson S.N."/>
            <person name="Smith H.O."/>
            <person name="Hutchison C.A. III"/>
            <person name="Venter J.C."/>
        </authorList>
    </citation>
    <scope>NUCLEOTIDE SEQUENCE [LARGE SCALE GENOMIC DNA]</scope>
    <source>
        <strain>ATCC 33530 / DSM 19775 / NCTC 10195 / G37</strain>
    </source>
</reference>
<reference key="2">
    <citation type="submission" date="1998-10" db="EMBL/GenBank/DDBJ databases">
        <authorList>
            <person name="Fraser C.M."/>
            <person name="Gocayne J.D."/>
            <person name="White O."/>
            <person name="Adams M.D."/>
            <person name="Clayton R.A."/>
            <person name="Fleischmann R.D."/>
            <person name="Bult C.J."/>
            <person name="Kerlavage A.R."/>
            <person name="Sutton G.G."/>
            <person name="Kelley J.M."/>
            <person name="Fritchman J.L."/>
            <person name="Weidman J.F."/>
            <person name="Small K.V."/>
            <person name="Sandusky M."/>
            <person name="Fuhrmann J.L."/>
            <person name="Nguyen D.T."/>
            <person name="Utterback T.R."/>
            <person name="Saudek D.M."/>
            <person name="Phillips C.A."/>
            <person name="Merrick J.M."/>
            <person name="Tomb J.-F."/>
            <person name="Dougherty B.A."/>
            <person name="Bott K.F."/>
            <person name="Hu P.-C."/>
            <person name="Lucier T.S."/>
            <person name="Peterson S.N."/>
            <person name="Smith H.O."/>
            <person name="Hutchison C.A. III"/>
            <person name="Venter J.C."/>
        </authorList>
    </citation>
    <scope>IDENTIFICATION</scope>
</reference>
<reference key="3">
    <citation type="journal article" date="2011" name="J. Biol. Chem.">
        <title>Expression and characterization of a Mycoplasma genitalium glycosyltransferase in membrane glycolipid biosynthesis: potential target against mycoplasma infections.</title>
        <authorList>
            <person name="Andres E."/>
            <person name="Martinez N."/>
            <person name="Planas A."/>
        </authorList>
    </citation>
    <scope>FUNCTION</scope>
    <scope>CATALYTIC ACTIVITY</scope>
    <scope>BIOPHYSICOCHEMICAL PROPERTIES</scope>
    <scope>SUBSTRATE SPECIFICITY</scope>
    <scope>ACTIVITY REGULATION</scope>
    <scope>SUBCELLULAR LOCATION</scope>
</reference>
<comment type="function">
    <text evidence="2">Processive glycosyltransferase involved in the biosynthesis of both the non-bilayer-prone beta-monoglycosyldiacylglycerol and the bilayer-forming membrane lipid beta-diglycosyldiacylglycerol. These components contribute to regulate the properties and stability of the membrane. Catalyzes sequentially the transfers of glucosyl or galactosyl residues from UDP-Glc or UDP-Gal to diacylglycerol (DAG) acceptor to form the corresponding beta-glycosyl-DAG (3-O-(beta-D-glycopyranosyl)-1,2-diacyl-sn-glycerol), which then acts as acceptor to give beta-diglycosyl-DAG product (3-O-(beta-D-glycopyranosyl-beta-(1-&gt;6)-D-glycopyranosyl)-1,2-diacyl-sn-glycerol). Dioleoylglycerol (DOG) is a preferred sugar acceptor than 3-O-(beta-D-glucopyranosyl)-1,2-dioleoyl-sn-glycerol.</text>
</comment>
<comment type="catalytic activity">
    <reaction evidence="2">
        <text>a 1,2-diacyl-sn-glycerol + UDP-alpha-D-glucose = a 1,2-diacyl-3-O-(beta-D-glucopyranosyl)-sn-glycerol + UDP + H(+)</text>
        <dbReference type="Rhea" id="RHEA:17285"/>
        <dbReference type="ChEBI" id="CHEBI:15378"/>
        <dbReference type="ChEBI" id="CHEBI:17815"/>
        <dbReference type="ChEBI" id="CHEBI:58223"/>
        <dbReference type="ChEBI" id="CHEBI:58885"/>
        <dbReference type="ChEBI" id="CHEBI:75799"/>
    </reaction>
</comment>
<comment type="catalytic activity">
    <reaction evidence="2">
        <text>a 1,2-diacyl-sn-glycerol + UDP-alpha-D-galactose = a 1,2-diacyl-3-O-(beta-D-galactosyl)-sn-glycerol + UDP + H(+)</text>
        <dbReference type="Rhea" id="RHEA:14945"/>
        <dbReference type="ChEBI" id="CHEBI:15378"/>
        <dbReference type="ChEBI" id="CHEBI:17615"/>
        <dbReference type="ChEBI" id="CHEBI:17815"/>
        <dbReference type="ChEBI" id="CHEBI:58223"/>
        <dbReference type="ChEBI" id="CHEBI:66914"/>
    </reaction>
</comment>
<comment type="catalytic activity">
    <reaction evidence="2">
        <text>a 1,2-diacyl-3-O-(beta-D-glucopyranosyl)-sn-glycerol + UDP-alpha-D-glucose = a 1,2-diacyl-3-O-(beta-D-Glc-(1-&gt;6)-beta-D-Glc)-sn-glycerol + UDP + H(+)</text>
        <dbReference type="Rhea" id="RHEA:39031"/>
        <dbReference type="ChEBI" id="CHEBI:15378"/>
        <dbReference type="ChEBI" id="CHEBI:58223"/>
        <dbReference type="ChEBI" id="CHEBI:58885"/>
        <dbReference type="ChEBI" id="CHEBI:75799"/>
        <dbReference type="ChEBI" id="CHEBI:76264"/>
    </reaction>
</comment>
<comment type="catalytic activity">
    <reaction evidence="2">
        <text>a 1,2-diacyl-3-O-(beta-D-galactosyl)-sn-glycerol + UDP-alpha-D-galactose = a 1,2-diacyl-3-O-[beta-D-galactosyl-(1-&gt;6)-beta-D-galactosyl]-sn-glycerol + UDP + H(+)</text>
        <dbReference type="Rhea" id="RHEA:53748"/>
        <dbReference type="ChEBI" id="CHEBI:15378"/>
        <dbReference type="ChEBI" id="CHEBI:17615"/>
        <dbReference type="ChEBI" id="CHEBI:58223"/>
        <dbReference type="ChEBI" id="CHEBI:66914"/>
        <dbReference type="ChEBI" id="CHEBI:87082"/>
    </reaction>
</comment>
<comment type="cofactor">
    <cofactor evidence="1">
        <name>Mg(2+)</name>
        <dbReference type="ChEBI" id="CHEBI:18420"/>
    </cofactor>
</comment>
<comment type="activity regulation">
    <text evidence="2">Activated by the negatively charged lipid dioleoylphosphatidylglycerol (DOPG) and inhibited by N-(n-nonyl)deoxygalactonojirimycin (C9J).</text>
</comment>
<comment type="biophysicochemical properties">
    <kinetics>
        <KM evidence="2">50 uM for UDP-Glc (in the presence of beta-glucosyl-DOG as sugar acceptor at pH 8 and 35 degrees Celsius)</KM>
        <KM evidence="2">87 uM for UDP-Glc (in the presence of DOG as sugar acceptor at pH 8 and 35 degrees Celsius)</KM>
        <KM evidence="2">90 uM for beta-glucosyl-DOG (in the presence of UDP-Gal as sugar donor at pH 8 and 35 degrees Celsius)</KM>
        <KM evidence="2">234 uM for UDP-Gal (in the presence of DOG as sugar acceptor at pH 8 and 35 degrees Celsius)</KM>
        <KM evidence="2">270 uM for DOG (in the presence of UDP-Gal as sugar donor at pH 8 and 35 degrees Celsius)</KM>
        <KM evidence="2">479 uM for UDP-Gal (in the presence of beta-glucosyl-DOG as sugar acceptor at pH 8 and 35 degrees Celsius)</KM>
        <text>kcat is 0.27 sec(-1) for Glc transfer with DOG as sugar acceptor. kcat is 1.10 sec(-1) for Gal transfer with DOG as sugar acceptor. kcat is 0.004 sec(-1) for Glc transfer with beta-glucosyl-DOG as sugar acceptor. kcat is 0.03 sec(-1) for Gal transfer with beta-glucosyl-DOG as sugar acceptor.</text>
    </kinetics>
</comment>
<comment type="pathway">
    <text>Glycolipid metabolism; diglucosyl-diacylglycerol biosynthesis.</text>
</comment>
<comment type="subcellular location">
    <subcellularLocation>
        <location evidence="2">Cell membrane</location>
    </subcellularLocation>
</comment>
<comment type="miscellaneous">
    <text evidence="4">The local lipid environment around the enzyme affects both the extent of head group elongation and total amounts of glycolipids produced.</text>
</comment>
<comment type="similarity">
    <text evidence="3">Belongs to the glycosyltransferase 2 family.</text>
</comment>
<proteinExistence type="evidence at protein level"/>
<gene>
    <name type="ordered locus">MG335.2</name>
</gene>
<name>PBDGT_MYCGE</name>
<evidence type="ECO:0000250" key="1"/>
<evidence type="ECO:0000269" key="2">
    <source>
    </source>
</evidence>
<evidence type="ECO:0000305" key="3"/>
<evidence type="ECO:0000305" key="4">
    <source>
    </source>
</evidence>
<protein>
    <recommendedName>
        <fullName>Processive diacylglycerol beta-glycosyltransferase</fullName>
        <ecNumber>2.4.1.-</ecNumber>
    </recommendedName>
    <alternativeName>
        <fullName>Beta-diglycosyldiacylglycerol synthase</fullName>
        <shortName>Beta-DGS</shortName>
        <shortName>DGlyDAG synthase</shortName>
    </alternativeName>
    <alternativeName>
        <fullName>Beta-monoglycosyldiacylglycerol synthase</fullName>
        <shortName>Beta-MGS</shortName>
        <shortName>MGlyDAG synthase</shortName>
    </alternativeName>
    <alternativeName>
        <fullName>Glycosyl-beta-1,6-glycosyldiacylglycerol synthase</fullName>
    </alternativeName>
    <alternativeName>
        <fullName>UDP-galactose:1,2-dioleoylglycerol 3-beta-D-galactosyltransferase</fullName>
    </alternativeName>
    <alternativeName>
        <fullName>UDP-glucose:1,2-dioleoylglycerol 3-beta-D-glucosyltransferase</fullName>
    </alternativeName>
</protein>
<organism>
    <name type="scientific">Mycoplasma genitalium (strain ATCC 33530 / DSM 19775 / NCTC 10195 / G37)</name>
    <name type="common">Mycoplasmoides genitalium</name>
    <dbReference type="NCBI Taxonomy" id="243273"/>
    <lineage>
        <taxon>Bacteria</taxon>
        <taxon>Bacillati</taxon>
        <taxon>Mycoplasmatota</taxon>
        <taxon>Mycoplasmoidales</taxon>
        <taxon>Mycoplasmoidaceae</taxon>
        <taxon>Mycoplasmoides</taxon>
    </lineage>
</organism>
<sequence>MDKLVSILVPCYKSKPFLKRFFNSLLKQDLNQAKIIFFNDNVADETYEVLQKFKKEHNNLAIEVYCDKQNEGIGKVRDKLVNLVTTPYFYFIDPDDCFNNKNVIKEIVESIKKEDFDLGVLKSMVYLCFLKHDFIIKFLPLKGIFQGRVKLINNNNVNKLNYIKNNDQYIWNIVINTDFFRKLNLTFESRLFEDIPIWYPMFFSSQKIVFIDVIGTNYFIRNDSLSTTISAPRYLNLIQCYEKLYVNLSQNGSLASFIDPNHKIEARFWRRQMFVWFALFSFEYFKKNFSESKKILEKLFVFLEKNGVYERVFQTKNQGIYYIWVQRLKYFKHVLESKSDN</sequence>
<accession>Q9ZB73</accession>
<keyword id="KW-0119">Carbohydrate metabolism</keyword>
<keyword id="KW-1003">Cell membrane</keyword>
<keyword id="KW-0319">Glycerol metabolism</keyword>
<keyword id="KW-0328">Glycosyltransferase</keyword>
<keyword id="KW-0444">Lipid biosynthesis</keyword>
<keyword id="KW-0443">Lipid metabolism</keyword>
<keyword id="KW-0460">Magnesium</keyword>
<keyword id="KW-0472">Membrane</keyword>
<keyword id="KW-1185">Reference proteome</keyword>
<keyword id="KW-0808">Transferase</keyword>